<comment type="function">
    <text evidence="2">Functions as a GC-rich promoter-specific transactivating transcription factor.</text>
</comment>
<comment type="subunit">
    <text evidence="1">Interacts with GTF2B, GTF2F2, RNA polymerase II and TBP.</text>
</comment>
<comment type="subcellular location">
    <subcellularLocation>
        <location evidence="2">Nucleus</location>
    </subcellularLocation>
</comment>
<comment type="similarity">
    <text evidence="5">Belongs to the vasculin family.</text>
</comment>
<organism>
    <name type="scientific">Pongo abelii</name>
    <name type="common">Sumatran orangutan</name>
    <name type="synonym">Pongo pygmaeus abelii</name>
    <dbReference type="NCBI Taxonomy" id="9601"/>
    <lineage>
        <taxon>Eukaryota</taxon>
        <taxon>Metazoa</taxon>
        <taxon>Chordata</taxon>
        <taxon>Craniata</taxon>
        <taxon>Vertebrata</taxon>
        <taxon>Euteleostomi</taxon>
        <taxon>Mammalia</taxon>
        <taxon>Eutheria</taxon>
        <taxon>Euarchontoglires</taxon>
        <taxon>Primates</taxon>
        <taxon>Haplorrhini</taxon>
        <taxon>Catarrhini</taxon>
        <taxon>Hominidae</taxon>
        <taxon>Pongo</taxon>
    </lineage>
</organism>
<sequence>MAQHDFAPAWLNFPTPPSSTKSSLNFEKHSENFAWTENRYDVNRRRHNSSDGFDSAIGRPNGGNFGRKEKNGWRTHGRNGTENINHRGGYHGGSSRSRSSIFHSGKSQGLHENNIPDNETGRKEDKRERKQFEAEDFPSLNPEYEREPNHNKSLAAGVWEYPPNPKSRAPRMLVIKKGNTKDLQLSGFPVVGNLPSQPVKNGTGPSVYKGLVPKPAAPPTKPTQWKSQTKENKVGTSFPHESTFGVGNFNAFKSTAKNFSPSTNSVKECNRSNSSSPVDKLNQQPRLTKLTRMRTDKKSEFLKALKRDRVEEEHEDESRAGSEKDDDSFNLHNSNSTHQERDINRNFDENEIPQENGNASVISQQIIRSSTFPQTDVLSSSLEAEHRLLKEMGWQEDSENDETCAPITEDEMREFQVISEQLQKNGLRKNGILKNGLICDFKFGPWKNSTFKPTTENDDTETSSSDTSDDDDV</sequence>
<gene>
    <name type="primary">GPBP1</name>
</gene>
<protein>
    <recommendedName>
        <fullName>Vasculin</fullName>
    </recommendedName>
    <alternativeName>
        <fullName>GC-rich promoter-binding protein 1</fullName>
    </alternativeName>
</protein>
<evidence type="ECO:0000250" key="1"/>
<evidence type="ECO:0000250" key="2">
    <source>
        <dbReference type="UniProtKB" id="Q6NXH3"/>
    </source>
</evidence>
<evidence type="ECO:0000250" key="3">
    <source>
        <dbReference type="UniProtKB" id="Q86WP2"/>
    </source>
</evidence>
<evidence type="ECO:0000256" key="4">
    <source>
        <dbReference type="SAM" id="MobiDB-lite"/>
    </source>
</evidence>
<evidence type="ECO:0000305" key="5"/>
<keyword id="KW-0010">Activator</keyword>
<keyword id="KW-0238">DNA-binding</keyword>
<keyword id="KW-0488">Methylation</keyword>
<keyword id="KW-0539">Nucleus</keyword>
<keyword id="KW-0597">Phosphoprotein</keyword>
<keyword id="KW-1185">Reference proteome</keyword>
<keyword id="KW-0804">Transcription</keyword>
<keyword id="KW-0805">Transcription regulation</keyword>
<dbReference type="EMBL" id="CR861300">
    <property type="protein sequence ID" value="CAH93367.1"/>
    <property type="molecule type" value="mRNA"/>
</dbReference>
<dbReference type="RefSeq" id="NP_001126983.1">
    <property type="nucleotide sequence ID" value="NM_001133511.1"/>
</dbReference>
<dbReference type="SMR" id="Q5R4E9"/>
<dbReference type="FunCoup" id="Q5R4E9">
    <property type="interactions" value="4098"/>
</dbReference>
<dbReference type="STRING" id="9601.ENSPPYP00000017298"/>
<dbReference type="GeneID" id="100174003"/>
<dbReference type="KEGG" id="pon:100174003"/>
<dbReference type="CTD" id="65056"/>
<dbReference type="eggNOG" id="ENOG502QR5W">
    <property type="taxonomic scope" value="Eukaryota"/>
</dbReference>
<dbReference type="InParanoid" id="Q5R4E9"/>
<dbReference type="OrthoDB" id="8741226at2759"/>
<dbReference type="Proteomes" id="UP000001595">
    <property type="component" value="Unplaced"/>
</dbReference>
<dbReference type="GO" id="GO:0005634">
    <property type="term" value="C:nucleus"/>
    <property type="evidence" value="ECO:0007669"/>
    <property type="project" value="UniProtKB-SubCell"/>
</dbReference>
<dbReference type="GO" id="GO:0003677">
    <property type="term" value="F:DNA binding"/>
    <property type="evidence" value="ECO:0007669"/>
    <property type="project" value="UniProtKB-KW"/>
</dbReference>
<dbReference type="GO" id="GO:0003723">
    <property type="term" value="F:RNA binding"/>
    <property type="evidence" value="ECO:0007669"/>
    <property type="project" value="InterPro"/>
</dbReference>
<dbReference type="GO" id="GO:0006351">
    <property type="term" value="P:DNA-templated transcription"/>
    <property type="evidence" value="ECO:0007669"/>
    <property type="project" value="InterPro"/>
</dbReference>
<dbReference type="GO" id="GO:0045893">
    <property type="term" value="P:positive regulation of DNA-templated transcription"/>
    <property type="evidence" value="ECO:0007669"/>
    <property type="project" value="InterPro"/>
</dbReference>
<dbReference type="InterPro" id="IPR028128">
    <property type="entry name" value="Vasculin_fam"/>
</dbReference>
<dbReference type="PANTHER" id="PTHR14339">
    <property type="entry name" value="VASCULIN"/>
    <property type="match status" value="1"/>
</dbReference>
<dbReference type="PANTHER" id="PTHR14339:SF11">
    <property type="entry name" value="VASCULIN"/>
    <property type="match status" value="1"/>
</dbReference>
<dbReference type="Pfam" id="PF15337">
    <property type="entry name" value="Vasculin"/>
    <property type="match status" value="1"/>
</dbReference>
<name>GPBP1_PONAB</name>
<feature type="chain" id="PRO_0000324112" description="Vasculin">
    <location>
        <begin position="1"/>
        <end position="473"/>
    </location>
</feature>
<feature type="region of interest" description="Disordered" evidence="4">
    <location>
        <begin position="1"/>
        <end position="25"/>
    </location>
</feature>
<feature type="region of interest" description="Disordered" evidence="4">
    <location>
        <begin position="45"/>
        <end position="169"/>
    </location>
</feature>
<feature type="region of interest" description="Disordered" evidence="4">
    <location>
        <begin position="191"/>
        <end position="342"/>
    </location>
</feature>
<feature type="region of interest" description="Disordered" evidence="4">
    <location>
        <begin position="444"/>
        <end position="473"/>
    </location>
</feature>
<feature type="compositionally biased region" description="Low complexity" evidence="4">
    <location>
        <begin position="93"/>
        <end position="107"/>
    </location>
</feature>
<feature type="compositionally biased region" description="Basic and acidic residues" evidence="4">
    <location>
        <begin position="119"/>
        <end position="133"/>
    </location>
</feature>
<feature type="compositionally biased region" description="Polar residues" evidence="4">
    <location>
        <begin position="194"/>
        <end position="204"/>
    </location>
</feature>
<feature type="compositionally biased region" description="Polar residues" evidence="4">
    <location>
        <begin position="251"/>
        <end position="286"/>
    </location>
</feature>
<feature type="compositionally biased region" description="Basic and acidic residues" evidence="4">
    <location>
        <begin position="293"/>
        <end position="329"/>
    </location>
</feature>
<feature type="compositionally biased region" description="Acidic residues" evidence="4">
    <location>
        <begin position="456"/>
        <end position="473"/>
    </location>
</feature>
<feature type="modified residue" description="Phosphoserine" evidence="3">
    <location>
        <position position="49"/>
    </location>
</feature>
<feature type="modified residue" description="Omega-N-methylarginine" evidence="3">
    <location>
        <position position="87"/>
    </location>
</feature>
<feature type="modified residue" description="Phosphoserine" evidence="2">
    <location>
        <position position="274"/>
    </location>
</feature>
<feature type="modified residue" description="Phosphoserine" evidence="2">
    <location>
        <position position="276"/>
    </location>
</feature>
<feature type="modified residue" description="Phosphoserine" evidence="3">
    <location>
        <position position="322"/>
    </location>
</feature>
<feature type="modified residue" description="Phosphoserine" evidence="3">
    <location>
        <position position="381"/>
    </location>
</feature>
<accession>Q5R4E9</accession>
<reference key="1">
    <citation type="submission" date="2004-11" db="EMBL/GenBank/DDBJ databases">
        <authorList>
            <consortium name="The German cDNA consortium"/>
        </authorList>
    </citation>
    <scope>NUCLEOTIDE SEQUENCE [LARGE SCALE MRNA]</scope>
    <source>
        <tissue>Brain cortex</tissue>
    </source>
</reference>
<proteinExistence type="evidence at transcript level"/>